<name>CHS7_GIBZE</name>
<organism>
    <name type="scientific">Gibberella zeae (strain ATCC MYA-4620 / CBS 123657 / FGSC 9075 / NRRL 31084 / PH-1)</name>
    <name type="common">Wheat head blight fungus</name>
    <name type="synonym">Fusarium graminearum</name>
    <dbReference type="NCBI Taxonomy" id="229533"/>
    <lineage>
        <taxon>Eukaryota</taxon>
        <taxon>Fungi</taxon>
        <taxon>Dikarya</taxon>
        <taxon>Ascomycota</taxon>
        <taxon>Pezizomycotina</taxon>
        <taxon>Sordariomycetes</taxon>
        <taxon>Hypocreomycetidae</taxon>
        <taxon>Hypocreales</taxon>
        <taxon>Nectriaceae</taxon>
        <taxon>Fusarium</taxon>
    </lineage>
</organism>
<dbReference type="EMBL" id="DS231663">
    <property type="protein sequence ID" value="ESU08205.1"/>
    <property type="molecule type" value="Genomic_DNA"/>
</dbReference>
<dbReference type="EMBL" id="HG970332">
    <property type="protein sequence ID" value="CEF75082.1"/>
    <property type="molecule type" value="Genomic_DNA"/>
</dbReference>
<dbReference type="RefSeq" id="XP_011318690.1">
    <property type="nucleotide sequence ID" value="XM_011320388.1"/>
</dbReference>
<dbReference type="FunCoup" id="Q4IJ79">
    <property type="interactions" value="64"/>
</dbReference>
<dbReference type="STRING" id="229533.Q4IJ79"/>
<dbReference type="GeneID" id="23550090"/>
<dbReference type="KEGG" id="fgr:FGSG_02729"/>
<dbReference type="VEuPathDB" id="FungiDB:FGRAMPH1_01G06553"/>
<dbReference type="eggNOG" id="ENOG502QRVH">
    <property type="taxonomic scope" value="Eukaryota"/>
</dbReference>
<dbReference type="HOGENOM" id="CLU_050424_1_1_1"/>
<dbReference type="InParanoid" id="Q4IJ79"/>
<dbReference type="OrthoDB" id="24763at110618"/>
<dbReference type="Proteomes" id="UP000070720">
    <property type="component" value="Chromosome 1"/>
</dbReference>
<dbReference type="GO" id="GO:0005789">
    <property type="term" value="C:endoplasmic reticulum membrane"/>
    <property type="evidence" value="ECO:0007669"/>
    <property type="project" value="UniProtKB-SubCell"/>
</dbReference>
<dbReference type="GO" id="GO:0051082">
    <property type="term" value="F:unfolded protein binding"/>
    <property type="evidence" value="ECO:0007669"/>
    <property type="project" value="TreeGrafter"/>
</dbReference>
<dbReference type="GO" id="GO:0071555">
    <property type="term" value="P:cell wall organization"/>
    <property type="evidence" value="ECO:0007669"/>
    <property type="project" value="UniProtKB-KW"/>
</dbReference>
<dbReference type="GO" id="GO:0006457">
    <property type="term" value="P:protein folding"/>
    <property type="evidence" value="ECO:0007669"/>
    <property type="project" value="TreeGrafter"/>
</dbReference>
<dbReference type="GO" id="GO:0015031">
    <property type="term" value="P:protein transport"/>
    <property type="evidence" value="ECO:0007669"/>
    <property type="project" value="UniProtKB-KW"/>
</dbReference>
<dbReference type="InterPro" id="IPR022057">
    <property type="entry name" value="Chs7"/>
</dbReference>
<dbReference type="PANTHER" id="PTHR35329">
    <property type="entry name" value="CHITIN SYNTHASE EXPORT CHAPERONE"/>
    <property type="match status" value="1"/>
</dbReference>
<dbReference type="PANTHER" id="PTHR35329:SF2">
    <property type="entry name" value="CHITIN SYNTHASE EXPORT CHAPERONE"/>
    <property type="match status" value="1"/>
</dbReference>
<dbReference type="Pfam" id="PF12271">
    <property type="entry name" value="Chs7"/>
    <property type="match status" value="1"/>
</dbReference>
<feature type="chain" id="PRO_0000280579" description="Chitin synthase export chaperone">
    <location>
        <begin position="1"/>
        <end position="334"/>
    </location>
</feature>
<feature type="transmembrane region" description="Helical" evidence="2">
    <location>
        <begin position="49"/>
        <end position="69"/>
    </location>
</feature>
<feature type="transmembrane region" description="Helical" evidence="2">
    <location>
        <begin position="88"/>
        <end position="108"/>
    </location>
</feature>
<feature type="transmembrane region" description="Helical" evidence="2">
    <location>
        <begin position="123"/>
        <end position="143"/>
    </location>
</feature>
<feature type="transmembrane region" description="Helical" evidence="2">
    <location>
        <begin position="159"/>
        <end position="179"/>
    </location>
</feature>
<feature type="transmembrane region" description="Helical" evidence="2">
    <location>
        <begin position="185"/>
        <end position="205"/>
    </location>
</feature>
<feature type="transmembrane region" description="Helical" evidence="2">
    <location>
        <begin position="220"/>
        <end position="240"/>
    </location>
</feature>
<feature type="transmembrane region" description="Helical" evidence="2">
    <location>
        <begin position="250"/>
        <end position="270"/>
    </location>
</feature>
<feature type="sequence conflict" description="In Ref. 1; ESU08205." ref="1">
    <original>F</original>
    <variation>S</variation>
    <location>
        <position position="173"/>
    </location>
</feature>
<keyword id="KW-0961">Cell wall biogenesis/degradation</keyword>
<keyword id="KW-0256">Endoplasmic reticulum</keyword>
<keyword id="KW-0472">Membrane</keyword>
<keyword id="KW-0653">Protein transport</keyword>
<keyword id="KW-1185">Reference proteome</keyword>
<keyword id="KW-0812">Transmembrane</keyword>
<keyword id="KW-1133">Transmembrane helix</keyword>
<keyword id="KW-0813">Transport</keyword>
<gene>
    <name type="primary">CHS7</name>
    <name type="ORF">FGRRES_02729</name>
    <name type="ORF">FGSG_02729</name>
</gene>
<comment type="function">
    <text evidence="1">Chaperone required for the export of the chitin synthase CHS3 from the endoplasmic reticulum.</text>
</comment>
<comment type="subunit">
    <text evidence="1">Interacts with CHS3.</text>
</comment>
<comment type="subcellular location">
    <subcellularLocation>
        <location evidence="1">Endoplasmic reticulum membrane</location>
        <topology evidence="1">Multi-pass membrane protein</topology>
    </subcellularLocation>
</comment>
<comment type="similarity">
    <text evidence="3">Belongs to the CHS7 family.</text>
</comment>
<protein>
    <recommendedName>
        <fullName>Chitin synthase export chaperone</fullName>
    </recommendedName>
</protein>
<accession>Q4IJ79</accession>
<accession>A0A098D9F7</accession>
<accession>A0A0E0RV07</accession>
<accession>I1RG75</accession>
<accession>V6R8K0</accession>
<reference key="1">
    <citation type="journal article" date="2007" name="Science">
        <title>The Fusarium graminearum genome reveals a link between localized polymorphism and pathogen specialization.</title>
        <authorList>
            <person name="Cuomo C.A."/>
            <person name="Gueldener U."/>
            <person name="Xu J.-R."/>
            <person name="Trail F."/>
            <person name="Turgeon B.G."/>
            <person name="Di Pietro A."/>
            <person name="Walton J.D."/>
            <person name="Ma L.-J."/>
            <person name="Baker S.E."/>
            <person name="Rep M."/>
            <person name="Adam G."/>
            <person name="Antoniw J."/>
            <person name="Baldwin T."/>
            <person name="Calvo S.E."/>
            <person name="Chang Y.-L."/>
            <person name="DeCaprio D."/>
            <person name="Gale L.R."/>
            <person name="Gnerre S."/>
            <person name="Goswami R.S."/>
            <person name="Hammond-Kosack K."/>
            <person name="Harris L.J."/>
            <person name="Hilburn K."/>
            <person name="Kennell J.C."/>
            <person name="Kroken S."/>
            <person name="Magnuson J.K."/>
            <person name="Mannhaupt G."/>
            <person name="Mauceli E.W."/>
            <person name="Mewes H.-W."/>
            <person name="Mitterbauer R."/>
            <person name="Muehlbauer G."/>
            <person name="Muensterkoetter M."/>
            <person name="Nelson D."/>
            <person name="O'Donnell K."/>
            <person name="Ouellet T."/>
            <person name="Qi W."/>
            <person name="Quesneville H."/>
            <person name="Roncero M.I.G."/>
            <person name="Seong K.-Y."/>
            <person name="Tetko I.V."/>
            <person name="Urban M."/>
            <person name="Waalwijk C."/>
            <person name="Ward T.J."/>
            <person name="Yao J."/>
            <person name="Birren B.W."/>
            <person name="Kistler H.C."/>
        </authorList>
    </citation>
    <scope>NUCLEOTIDE SEQUENCE [LARGE SCALE GENOMIC DNA]</scope>
    <source>
        <strain>ATCC MYA-4620 / CBS 123657 / FGSC 9075 / NRRL 31084 / PH-1</strain>
    </source>
</reference>
<reference key="2">
    <citation type="journal article" date="2010" name="Nature">
        <title>Comparative genomics reveals mobile pathogenicity chromosomes in Fusarium.</title>
        <authorList>
            <person name="Ma L.-J."/>
            <person name="van der Does H.C."/>
            <person name="Borkovich K.A."/>
            <person name="Coleman J.J."/>
            <person name="Daboussi M.-J."/>
            <person name="Di Pietro A."/>
            <person name="Dufresne M."/>
            <person name="Freitag M."/>
            <person name="Grabherr M."/>
            <person name="Henrissat B."/>
            <person name="Houterman P.M."/>
            <person name="Kang S."/>
            <person name="Shim W.-B."/>
            <person name="Woloshuk C."/>
            <person name="Xie X."/>
            <person name="Xu J.-R."/>
            <person name="Antoniw J."/>
            <person name="Baker S.E."/>
            <person name="Bluhm B.H."/>
            <person name="Breakspear A."/>
            <person name="Brown D.W."/>
            <person name="Butchko R.A.E."/>
            <person name="Chapman S."/>
            <person name="Coulson R."/>
            <person name="Coutinho P.M."/>
            <person name="Danchin E.G.J."/>
            <person name="Diener A."/>
            <person name="Gale L.R."/>
            <person name="Gardiner D.M."/>
            <person name="Goff S."/>
            <person name="Hammond-Kosack K.E."/>
            <person name="Hilburn K."/>
            <person name="Hua-Van A."/>
            <person name="Jonkers W."/>
            <person name="Kazan K."/>
            <person name="Kodira C.D."/>
            <person name="Koehrsen M."/>
            <person name="Kumar L."/>
            <person name="Lee Y.-H."/>
            <person name="Li L."/>
            <person name="Manners J.M."/>
            <person name="Miranda-Saavedra D."/>
            <person name="Mukherjee M."/>
            <person name="Park G."/>
            <person name="Park J."/>
            <person name="Park S.-Y."/>
            <person name="Proctor R.H."/>
            <person name="Regev A."/>
            <person name="Ruiz-Roldan M.C."/>
            <person name="Sain D."/>
            <person name="Sakthikumar S."/>
            <person name="Sykes S."/>
            <person name="Schwartz D.C."/>
            <person name="Turgeon B.G."/>
            <person name="Wapinski I."/>
            <person name="Yoder O."/>
            <person name="Young S."/>
            <person name="Zeng Q."/>
            <person name="Zhou S."/>
            <person name="Galagan J."/>
            <person name="Cuomo C.A."/>
            <person name="Kistler H.C."/>
            <person name="Rep M."/>
        </authorList>
    </citation>
    <scope>GENOME REANNOTATION</scope>
    <source>
        <strain>ATCC MYA-4620 / CBS 123657 / FGSC 9075 / NRRL 31084 / PH-1</strain>
    </source>
</reference>
<reference key="3">
    <citation type="journal article" date="2015" name="BMC Genomics">
        <title>The completed genome sequence of the pathogenic ascomycete fungus Fusarium graminearum.</title>
        <authorList>
            <person name="King R."/>
            <person name="Urban M."/>
            <person name="Hammond-Kosack M.C.U."/>
            <person name="Hassani-Pak K."/>
            <person name="Hammond-Kosack K.E."/>
        </authorList>
    </citation>
    <scope>NUCLEOTIDE SEQUENCE [LARGE SCALE GENOMIC DNA]</scope>
    <source>
        <strain>ATCC MYA-4620 / CBS 123657 / FGSC 9075 / NRRL 31084 / PH-1</strain>
    </source>
</reference>
<proteinExistence type="inferred from homology"/>
<sequence>MSGFGDFTTICETAPLPLCAAVGPVLQATGRTGIEPECYARNIELANTIIFEGATAVMHIVALVMTVIMILHVRSKFTAVGRKEILSFFYLYMLLSAMSLVIDAGVVPPGSDPYPYLVSVQNGFSSAVITCLLINGFVGFQLYEDGTPLSVWMLRISTLAAFTISFLVSLATFKSWAGLSPTNTVGLFVVLYLLNAIQLFIYVAMQILLVTRTLHDRWPLGDIAFGIFFFVAGQVFLYAFSSKICNAISHYLDGLFLATVCNLLGVMMVYKYWDSITKEDLEFSVGTRMNNWEVKELLPEEERRATVFSEDLYGQNSSYDLPYSPGAARYSAKY</sequence>
<evidence type="ECO:0000250" key="1"/>
<evidence type="ECO:0000255" key="2"/>
<evidence type="ECO:0000305" key="3"/>